<accession>B6QCA7</accession>
<name>ARO12_TALMQ</name>
<keyword id="KW-0028">Amino-acid biosynthesis</keyword>
<keyword id="KW-0057">Aromatic amino acid biosynthesis</keyword>
<keyword id="KW-0067">ATP-binding</keyword>
<keyword id="KW-0963">Cytoplasm</keyword>
<keyword id="KW-0418">Kinase</keyword>
<keyword id="KW-0456">Lyase</keyword>
<keyword id="KW-0479">Metal-binding</keyword>
<keyword id="KW-0511">Multifunctional enzyme</keyword>
<keyword id="KW-0521">NADP</keyword>
<keyword id="KW-0547">Nucleotide-binding</keyword>
<keyword id="KW-0560">Oxidoreductase</keyword>
<keyword id="KW-1185">Reference proteome</keyword>
<keyword id="KW-0808">Transferase</keyword>
<keyword id="KW-0862">Zinc</keyword>
<sequence>MAEPTKISILGRESIVAEYGIWGTYIVQDLLTNLPSTTYVLVTDTNLGSIYREKFAKVFNEAAAALSPAPRLLTKEIPPGENSKSRQGKADIEDWMLQQTCGRDTVIIALGGGVIGDLLGFVASTYMRGIRFVQVPTTLLAMVDSSIGGKTAIDTPLGKNLIGAIWQPHRIYIDIDFIDTLPEREFINGMAEVIKTAAISDEKEFAALEQHADAILKAARSKAGKGRFDSVRQVLKDRIVASARHKAYVVTADEREGGLRNLLNLGHSIGHAIEAILSPQVLHGECVAIGMVKELELARYLGILKPIAVSRMVKCLSKYGLPTSLKDARVRKHTAGKHCSLEQLMANMALDKKNDGPKKKVVLLSAIGKTYEPKASVVSNEDIRVVLAPSIEVIPGVPKNLNVVCAPPGSKSISNRALVLAALGSGTVRVKNLLHSDDTEVMLNALERLGAATFAWEDEGEVLVVNGNGGKMQASPTELYLGNAGTASRFLTSVATLSGKGSVDYNILTGNNRMKQRPIGDLVDALTVNGAQVEYLEKAGSLPLKIAASGGFKGGRINLAAKVSSQYVSSLLMCAPYAKEPVTLKLVGGKPISLSYIEMTTAMMRSFGIDVQKSTTEEWTYHIPQGSYTNPPEYVIESDASSATYPLAIAAVTGTTCTVPNIGSASLQGDARFAVEVLRPMGCNVEQTATSTTVTGPADGVLRPLPNVDMEPMTDAFLGASVLAAIAQGKGGNNTTRIYGIANQRVKECNRIEAMRVELAKFGVVCREHPDGLEIDGINRSSLRHPAGGVFCYDDHRVAFSFSILSLVAPTSTLILEKECVGKTWPTYWDALKQKFGVQLEGKELAESEVTHGSADRSNASIIIIGMRGAGKTTTGRWAAKALNRKFIDLDVELEQTEGKTIPDLIKERGWQGFRDAELSLFKRALAERPTGHVFACGGGIVEIAEARKILVDYHKNKGNVLLVMRDIKKVMEFLNIDKTRPAYIEDMMSVWLRRQPWYQECSNVQYYSRHSSSPELALAMDDFGRFIQFVSGQTDYLAAIRKKHLSFFVSLTLPDLRESGDLLRTVASGSDAVELRVDLLKDPSSDSVIPSAEYVAEQISFYRSRVSLPIVFTIRTVSQGGKFPDDAHDAALELIMLAIRSGCEFIDLEITFPEDLLRKVTESKAHAKIIASHHDPRGKLNWANGSWIQYYNKALQYGDIIKLVGVAETLKDNTSLKDFKDWAEQAHPDVPVIAINMGDKGQLSRMLNGFLTPVSHPALPFKAAPGQLSAAEIRRGLSIMGEIPAKKFAVLGKPVSASRSPPMHNTLFEQNGLPHVYTRLETDKAQDVKEFIRSPDFGGASVTIPLKLDIIPLIDEILNEAEIIGAVNTIIPVEGKDGSTRLVGRNTDWSGIVRCLREAGAHSNEGKSSALVIGGGGTARAAIYALHHMGFSTIYVLGRSPEKIQNMASTFPTGFDIRVLEHANDVESIPRVAVGTIPGDKPIESNIREILCTIFQRSGSAGDESGVLLEMAYKPSVTPLIQLASDYGWTTIPGLEALVGQGVYQFEYWTGITPVYEVARNAVLGTNETK</sequence>
<gene>
    <name evidence="1" type="primary">aroM-2</name>
    <name type="ORF">PMAA_067060</name>
</gene>
<organism>
    <name type="scientific">Talaromyces marneffei (strain ATCC 18224 / CBS 334.59 / QM 7333)</name>
    <name type="common">Penicillium marneffei</name>
    <dbReference type="NCBI Taxonomy" id="441960"/>
    <lineage>
        <taxon>Eukaryota</taxon>
        <taxon>Fungi</taxon>
        <taxon>Dikarya</taxon>
        <taxon>Ascomycota</taxon>
        <taxon>Pezizomycotina</taxon>
        <taxon>Eurotiomycetes</taxon>
        <taxon>Eurotiomycetidae</taxon>
        <taxon>Eurotiales</taxon>
        <taxon>Trichocomaceae</taxon>
        <taxon>Talaromyces</taxon>
        <taxon>Talaromyces sect. Talaromyces</taxon>
    </lineage>
</organism>
<reference key="1">
    <citation type="journal article" date="2015" name="Genome Announc.">
        <title>Genome sequence of the AIDS-associated pathogen Penicillium marneffei (ATCC18224) and its near taxonomic relative Talaromyces stipitatus (ATCC10500).</title>
        <authorList>
            <person name="Nierman W.C."/>
            <person name="Fedorova-Abrams N.D."/>
            <person name="Andrianopoulos A."/>
        </authorList>
    </citation>
    <scope>NUCLEOTIDE SEQUENCE [LARGE SCALE GENOMIC DNA]</scope>
    <source>
        <strain>ATCC 18224 / CBS 334.59 / QM 7333</strain>
    </source>
</reference>
<comment type="function">
    <text evidence="1">The AROM polypeptide catalyzes 5 consecutive enzymatic reactions in prechorismate polyaromatic amino acid biosynthesis.</text>
</comment>
<comment type="catalytic activity">
    <reaction evidence="1">
        <text>7-phospho-2-dehydro-3-deoxy-D-arabino-heptonate = 3-dehydroquinate + phosphate</text>
        <dbReference type="Rhea" id="RHEA:21968"/>
        <dbReference type="ChEBI" id="CHEBI:32364"/>
        <dbReference type="ChEBI" id="CHEBI:43474"/>
        <dbReference type="ChEBI" id="CHEBI:58394"/>
        <dbReference type="EC" id="4.2.3.4"/>
    </reaction>
</comment>
<comment type="catalytic activity">
    <reaction evidence="1">
        <text>3-dehydroquinate = 3-dehydroshikimate + H2O</text>
        <dbReference type="Rhea" id="RHEA:21096"/>
        <dbReference type="ChEBI" id="CHEBI:15377"/>
        <dbReference type="ChEBI" id="CHEBI:16630"/>
        <dbReference type="ChEBI" id="CHEBI:32364"/>
        <dbReference type="EC" id="4.2.1.10"/>
    </reaction>
</comment>
<comment type="catalytic activity">
    <reaction evidence="1">
        <text>shikimate + NADP(+) = 3-dehydroshikimate + NADPH + H(+)</text>
        <dbReference type="Rhea" id="RHEA:17737"/>
        <dbReference type="ChEBI" id="CHEBI:15378"/>
        <dbReference type="ChEBI" id="CHEBI:16630"/>
        <dbReference type="ChEBI" id="CHEBI:36208"/>
        <dbReference type="ChEBI" id="CHEBI:57783"/>
        <dbReference type="ChEBI" id="CHEBI:58349"/>
        <dbReference type="EC" id="1.1.1.25"/>
    </reaction>
</comment>
<comment type="catalytic activity">
    <reaction evidence="1">
        <text>shikimate + ATP = 3-phosphoshikimate + ADP + H(+)</text>
        <dbReference type="Rhea" id="RHEA:13121"/>
        <dbReference type="ChEBI" id="CHEBI:15378"/>
        <dbReference type="ChEBI" id="CHEBI:30616"/>
        <dbReference type="ChEBI" id="CHEBI:36208"/>
        <dbReference type="ChEBI" id="CHEBI:145989"/>
        <dbReference type="ChEBI" id="CHEBI:456216"/>
        <dbReference type="EC" id="2.7.1.71"/>
    </reaction>
</comment>
<comment type="catalytic activity">
    <reaction evidence="1">
        <text>3-phosphoshikimate + phosphoenolpyruvate = 5-O-(1-carboxyvinyl)-3-phosphoshikimate + phosphate</text>
        <dbReference type="Rhea" id="RHEA:21256"/>
        <dbReference type="ChEBI" id="CHEBI:43474"/>
        <dbReference type="ChEBI" id="CHEBI:57701"/>
        <dbReference type="ChEBI" id="CHEBI:58702"/>
        <dbReference type="ChEBI" id="CHEBI:145989"/>
        <dbReference type="EC" id="2.5.1.19"/>
    </reaction>
</comment>
<comment type="cofactor">
    <cofactor>
        <name>Zn(2+)</name>
        <dbReference type="ChEBI" id="CHEBI:29105"/>
    </cofactor>
    <text>Binds 2 Zn(2+) ions per subunit.</text>
</comment>
<comment type="pathway">
    <text evidence="1">Metabolic intermediate biosynthesis; chorismate biosynthesis; chorismate from D-erythrose 4-phosphate and phosphoenolpyruvate: step 2/7.</text>
</comment>
<comment type="pathway">
    <text evidence="1">Metabolic intermediate biosynthesis; chorismate biosynthesis; chorismate from D-erythrose 4-phosphate and phosphoenolpyruvate: step 3/7.</text>
</comment>
<comment type="pathway">
    <text evidence="1">Metabolic intermediate biosynthesis; chorismate biosynthesis; chorismate from D-erythrose 4-phosphate and phosphoenolpyruvate: step 4/7.</text>
</comment>
<comment type="pathway">
    <text evidence="1">Metabolic intermediate biosynthesis; chorismate biosynthesis; chorismate from D-erythrose 4-phosphate and phosphoenolpyruvate: step 5/7.</text>
</comment>
<comment type="pathway">
    <text evidence="1">Metabolic intermediate biosynthesis; chorismate biosynthesis; chorismate from D-erythrose 4-phosphate and phosphoenolpyruvate: step 6/7.</text>
</comment>
<comment type="subunit">
    <text evidence="1">Homodimer.</text>
</comment>
<comment type="subcellular location">
    <subcellularLocation>
        <location evidence="1">Cytoplasm</location>
    </subcellularLocation>
</comment>
<comment type="similarity">
    <text evidence="1">In the N-terminal section; belongs to the sugar phosphate cyclases superfamily. Dehydroquinate synthase family.</text>
</comment>
<comment type="similarity">
    <text evidence="1">In the 2nd section; belongs to the EPSP synthase family.</text>
</comment>
<comment type="similarity">
    <text evidence="1">In the 3rd section; belongs to the shikimate kinase family.</text>
</comment>
<comment type="similarity">
    <text evidence="1">In the 4th section; belongs to the type-I 3-dehydroquinase family.</text>
</comment>
<comment type="similarity">
    <text evidence="1">In the C-terminal section; belongs to the shikimate dehydrogenase family.</text>
</comment>
<protein>
    <recommendedName>
        <fullName evidence="1">Pentafunctional AROM polypeptide 2</fullName>
    </recommendedName>
    <domain>
        <recommendedName>
            <fullName evidence="1">3-dehydroquinate synthase</fullName>
            <shortName evidence="1">DHQS</shortName>
            <ecNumber evidence="1">4.2.3.4</ecNumber>
        </recommendedName>
    </domain>
    <domain>
        <recommendedName>
            <fullName evidence="1">3-phosphoshikimate 1-carboxyvinyltransferase</fullName>
            <ecNumber evidence="1">2.5.1.19</ecNumber>
        </recommendedName>
        <alternativeName>
            <fullName evidence="1">5-enolpyruvylshikimate-3-phosphate synthase</fullName>
            <shortName evidence="1">EPSP synthase</shortName>
            <shortName evidence="1">EPSPS</shortName>
        </alternativeName>
    </domain>
    <domain>
        <recommendedName>
            <fullName evidence="1">Shikimate kinase</fullName>
            <shortName evidence="1">SK</shortName>
            <ecNumber evidence="1">2.7.1.71</ecNumber>
        </recommendedName>
    </domain>
    <domain>
        <recommendedName>
            <fullName evidence="1">3-dehydroquinate dehydratase</fullName>
            <shortName evidence="1">3-dehydroquinase</shortName>
            <ecNumber evidence="1">4.2.1.10</ecNumber>
        </recommendedName>
    </domain>
    <domain>
        <recommendedName>
            <fullName evidence="1">Shikimate dehydrogenase</fullName>
            <ecNumber evidence="1">1.1.1.25</ecNumber>
        </recommendedName>
    </domain>
</protein>
<dbReference type="EC" id="4.2.3.4" evidence="1"/>
<dbReference type="EC" id="2.5.1.19" evidence="1"/>
<dbReference type="EC" id="2.7.1.71" evidence="1"/>
<dbReference type="EC" id="4.2.1.10" evidence="1"/>
<dbReference type="EC" id="1.1.1.25" evidence="1"/>
<dbReference type="EMBL" id="DS995900">
    <property type="protein sequence ID" value="EEA25601.1"/>
    <property type="molecule type" value="Genomic_DNA"/>
</dbReference>
<dbReference type="RefSeq" id="XP_002146148.1">
    <property type="nucleotide sequence ID" value="XM_002146112.1"/>
</dbReference>
<dbReference type="SMR" id="B6QCA7"/>
<dbReference type="STRING" id="441960.B6QCA7"/>
<dbReference type="VEuPathDB" id="FungiDB:PMAA_067060"/>
<dbReference type="HOGENOM" id="CLU_001201_1_2_1"/>
<dbReference type="OrthoDB" id="3114at28568"/>
<dbReference type="PhylomeDB" id="B6QCA7"/>
<dbReference type="UniPathway" id="UPA00053">
    <property type="reaction ID" value="UER00085"/>
</dbReference>
<dbReference type="UniPathway" id="UPA00053">
    <property type="reaction ID" value="UER00086"/>
</dbReference>
<dbReference type="UniPathway" id="UPA00053">
    <property type="reaction ID" value="UER00087"/>
</dbReference>
<dbReference type="UniPathway" id="UPA00053">
    <property type="reaction ID" value="UER00088"/>
</dbReference>
<dbReference type="UniPathway" id="UPA00053">
    <property type="reaction ID" value="UER00089"/>
</dbReference>
<dbReference type="Proteomes" id="UP000001294">
    <property type="component" value="Unassembled WGS sequence"/>
</dbReference>
<dbReference type="GO" id="GO:0005737">
    <property type="term" value="C:cytoplasm"/>
    <property type="evidence" value="ECO:0007669"/>
    <property type="project" value="UniProtKB-SubCell"/>
</dbReference>
<dbReference type="GO" id="GO:0003855">
    <property type="term" value="F:3-dehydroquinate dehydratase activity"/>
    <property type="evidence" value="ECO:0007669"/>
    <property type="project" value="UniProtKB-UniRule"/>
</dbReference>
<dbReference type="GO" id="GO:0003856">
    <property type="term" value="F:3-dehydroquinate synthase activity"/>
    <property type="evidence" value="ECO:0007669"/>
    <property type="project" value="UniProtKB-UniRule"/>
</dbReference>
<dbReference type="GO" id="GO:0003866">
    <property type="term" value="F:3-phosphoshikimate 1-carboxyvinyltransferase activity"/>
    <property type="evidence" value="ECO:0007669"/>
    <property type="project" value="UniProtKB-UniRule"/>
</dbReference>
<dbReference type="GO" id="GO:0005524">
    <property type="term" value="F:ATP binding"/>
    <property type="evidence" value="ECO:0007669"/>
    <property type="project" value="UniProtKB-UniRule"/>
</dbReference>
<dbReference type="GO" id="GO:0046872">
    <property type="term" value="F:metal ion binding"/>
    <property type="evidence" value="ECO:0007669"/>
    <property type="project" value="UniProtKB-UniRule"/>
</dbReference>
<dbReference type="GO" id="GO:0004764">
    <property type="term" value="F:shikimate 3-dehydrogenase (NADP+) activity"/>
    <property type="evidence" value="ECO:0007669"/>
    <property type="project" value="UniProtKB-UniRule"/>
</dbReference>
<dbReference type="GO" id="GO:0004765">
    <property type="term" value="F:shikimate kinase activity"/>
    <property type="evidence" value="ECO:0007669"/>
    <property type="project" value="UniProtKB-UniRule"/>
</dbReference>
<dbReference type="GO" id="GO:0008652">
    <property type="term" value="P:amino acid biosynthetic process"/>
    <property type="evidence" value="ECO:0007669"/>
    <property type="project" value="UniProtKB-KW"/>
</dbReference>
<dbReference type="GO" id="GO:0009073">
    <property type="term" value="P:aromatic amino acid family biosynthetic process"/>
    <property type="evidence" value="ECO:0007669"/>
    <property type="project" value="UniProtKB-UniRule"/>
</dbReference>
<dbReference type="GO" id="GO:0009423">
    <property type="term" value="P:chorismate biosynthetic process"/>
    <property type="evidence" value="ECO:0007669"/>
    <property type="project" value="UniProtKB-UniRule"/>
</dbReference>
<dbReference type="CDD" id="cd00502">
    <property type="entry name" value="DHQase_I"/>
    <property type="match status" value="1"/>
</dbReference>
<dbReference type="CDD" id="cd08195">
    <property type="entry name" value="DHQS"/>
    <property type="match status" value="1"/>
</dbReference>
<dbReference type="CDD" id="cd01556">
    <property type="entry name" value="EPSP_synthase"/>
    <property type="match status" value="1"/>
</dbReference>
<dbReference type="CDD" id="cd01065">
    <property type="entry name" value="NAD_bind_Shikimate_DH"/>
    <property type="match status" value="1"/>
</dbReference>
<dbReference type="CDD" id="cd00464">
    <property type="entry name" value="SK"/>
    <property type="match status" value="1"/>
</dbReference>
<dbReference type="FunFam" id="1.20.1090.10:FF:000007">
    <property type="entry name" value="Pentafunctional AROM polypeptide"/>
    <property type="match status" value="1"/>
</dbReference>
<dbReference type="FunFam" id="3.20.20.70:FF:000135">
    <property type="entry name" value="Pentafunctional AROM polypeptide"/>
    <property type="match status" value="1"/>
</dbReference>
<dbReference type="FunFam" id="3.40.50.1970:FF:000007">
    <property type="entry name" value="Pentafunctional AROM polypeptide"/>
    <property type="match status" value="1"/>
</dbReference>
<dbReference type="FunFam" id="3.40.50.300:FF:001256">
    <property type="entry name" value="Pentafunctional AROM polypeptide"/>
    <property type="match status" value="1"/>
</dbReference>
<dbReference type="FunFam" id="3.65.10.10:FF:000007">
    <property type="entry name" value="Pentafunctional AROM polypeptide"/>
    <property type="match status" value="1"/>
</dbReference>
<dbReference type="FunFam" id="3.65.10.10:FF:000008">
    <property type="entry name" value="Pentafunctional AROM polypeptide"/>
    <property type="match status" value="1"/>
</dbReference>
<dbReference type="Gene3D" id="3.40.50.1970">
    <property type="match status" value="1"/>
</dbReference>
<dbReference type="Gene3D" id="3.20.20.70">
    <property type="entry name" value="Aldolase class I"/>
    <property type="match status" value="1"/>
</dbReference>
<dbReference type="Gene3D" id="1.20.1090.10">
    <property type="entry name" value="Dehydroquinate synthase-like - alpha domain"/>
    <property type="match status" value="1"/>
</dbReference>
<dbReference type="Gene3D" id="3.65.10.10">
    <property type="entry name" value="Enolpyruvate transferase domain"/>
    <property type="match status" value="2"/>
</dbReference>
<dbReference type="Gene3D" id="3.40.50.10860">
    <property type="entry name" value="Leucine Dehydrogenase, chain A, domain 1"/>
    <property type="match status" value="1"/>
</dbReference>
<dbReference type="Gene3D" id="3.40.50.720">
    <property type="entry name" value="NAD(P)-binding Rossmann-like Domain"/>
    <property type="match status" value="1"/>
</dbReference>
<dbReference type="Gene3D" id="3.40.50.300">
    <property type="entry name" value="P-loop containing nucleotide triphosphate hydrolases"/>
    <property type="match status" value="1"/>
</dbReference>
<dbReference type="HAMAP" id="MF_00210">
    <property type="entry name" value="EPSP_synth"/>
    <property type="match status" value="1"/>
</dbReference>
<dbReference type="HAMAP" id="MF_03143">
    <property type="entry name" value="Pentafunct_AroM"/>
    <property type="match status" value="1"/>
</dbReference>
<dbReference type="HAMAP" id="MF_00109">
    <property type="entry name" value="Shikimate_kinase"/>
    <property type="match status" value="1"/>
</dbReference>
<dbReference type="InterPro" id="IPR018508">
    <property type="entry name" value="3-dehydroquinate_DH_AS"/>
</dbReference>
<dbReference type="InterPro" id="IPR013785">
    <property type="entry name" value="Aldolase_TIM"/>
</dbReference>
<dbReference type="InterPro" id="IPR046346">
    <property type="entry name" value="Aminoacid_DH-like_N_sf"/>
</dbReference>
<dbReference type="InterPro" id="IPR016037">
    <property type="entry name" value="DHQ_synth_AroB"/>
</dbReference>
<dbReference type="InterPro" id="IPR030960">
    <property type="entry name" value="DHQS/DOIS_N"/>
</dbReference>
<dbReference type="InterPro" id="IPR056179">
    <property type="entry name" value="DHQS_C"/>
</dbReference>
<dbReference type="InterPro" id="IPR001381">
    <property type="entry name" value="DHquinase_I"/>
</dbReference>
<dbReference type="InterPro" id="IPR001986">
    <property type="entry name" value="Enolpyruvate_Tfrase_dom"/>
</dbReference>
<dbReference type="InterPro" id="IPR036968">
    <property type="entry name" value="Enolpyruvate_Tfrase_sf"/>
</dbReference>
<dbReference type="InterPro" id="IPR006264">
    <property type="entry name" value="EPSP_synthase"/>
</dbReference>
<dbReference type="InterPro" id="IPR023193">
    <property type="entry name" value="EPSP_synthase_CS"/>
</dbReference>
<dbReference type="InterPro" id="IPR036291">
    <property type="entry name" value="NAD(P)-bd_dom_sf"/>
</dbReference>
<dbReference type="InterPro" id="IPR027417">
    <property type="entry name" value="P-loop_NTPase"/>
</dbReference>
<dbReference type="InterPro" id="IPR008289">
    <property type="entry name" value="Pentafunct_AroM"/>
</dbReference>
<dbReference type="InterPro" id="IPR013792">
    <property type="entry name" value="RNA3'P_cycl/enolpyr_Trfase_a/b"/>
</dbReference>
<dbReference type="InterPro" id="IPR041121">
    <property type="entry name" value="SDH_C"/>
</dbReference>
<dbReference type="InterPro" id="IPR031322">
    <property type="entry name" value="Shikimate/glucono_kinase"/>
</dbReference>
<dbReference type="InterPro" id="IPR013708">
    <property type="entry name" value="Shikimate_DH-bd_N"/>
</dbReference>
<dbReference type="InterPro" id="IPR010110">
    <property type="entry name" value="Shikimate_DH_AroM-type"/>
</dbReference>
<dbReference type="InterPro" id="IPR000623">
    <property type="entry name" value="Shikimate_kinase/TSH1"/>
</dbReference>
<dbReference type="InterPro" id="IPR023000">
    <property type="entry name" value="Shikimate_kinase_CS"/>
</dbReference>
<dbReference type="NCBIfam" id="TIGR01356">
    <property type="entry name" value="aroA"/>
    <property type="match status" value="1"/>
</dbReference>
<dbReference type="NCBIfam" id="TIGR01357">
    <property type="entry name" value="aroB"/>
    <property type="match status" value="1"/>
</dbReference>
<dbReference type="NCBIfam" id="TIGR01093">
    <property type="entry name" value="aroD"/>
    <property type="match status" value="1"/>
</dbReference>
<dbReference type="NCBIfam" id="TIGR01809">
    <property type="entry name" value="Shik-DH-AROM"/>
    <property type="match status" value="1"/>
</dbReference>
<dbReference type="PANTHER" id="PTHR21090">
    <property type="entry name" value="AROM/DEHYDROQUINATE SYNTHASE"/>
    <property type="match status" value="1"/>
</dbReference>
<dbReference type="PANTHER" id="PTHR21090:SF5">
    <property type="entry name" value="PENTAFUNCTIONAL AROM POLYPEPTIDE"/>
    <property type="match status" value="1"/>
</dbReference>
<dbReference type="Pfam" id="PF01761">
    <property type="entry name" value="DHQ_synthase"/>
    <property type="match status" value="1"/>
</dbReference>
<dbReference type="Pfam" id="PF24621">
    <property type="entry name" value="DHQS_C"/>
    <property type="match status" value="1"/>
</dbReference>
<dbReference type="Pfam" id="PF01487">
    <property type="entry name" value="DHquinase_I"/>
    <property type="match status" value="1"/>
</dbReference>
<dbReference type="Pfam" id="PF00275">
    <property type="entry name" value="EPSP_synthase"/>
    <property type="match status" value="1"/>
</dbReference>
<dbReference type="Pfam" id="PF18317">
    <property type="entry name" value="SDH_C"/>
    <property type="match status" value="1"/>
</dbReference>
<dbReference type="Pfam" id="PF08501">
    <property type="entry name" value="Shikimate_dh_N"/>
    <property type="match status" value="1"/>
</dbReference>
<dbReference type="Pfam" id="PF01202">
    <property type="entry name" value="SKI"/>
    <property type="match status" value="1"/>
</dbReference>
<dbReference type="PIRSF" id="PIRSF000514">
    <property type="entry name" value="Pentafunct_AroM"/>
    <property type="match status" value="1"/>
</dbReference>
<dbReference type="PRINTS" id="PR01100">
    <property type="entry name" value="SHIKIMTKNASE"/>
</dbReference>
<dbReference type="SUPFAM" id="SSF51569">
    <property type="entry name" value="Aldolase"/>
    <property type="match status" value="1"/>
</dbReference>
<dbReference type="SUPFAM" id="SSF53223">
    <property type="entry name" value="Aminoacid dehydrogenase-like, N-terminal domain"/>
    <property type="match status" value="1"/>
</dbReference>
<dbReference type="SUPFAM" id="SSF56796">
    <property type="entry name" value="Dehydroquinate synthase-like"/>
    <property type="match status" value="1"/>
</dbReference>
<dbReference type="SUPFAM" id="SSF55205">
    <property type="entry name" value="EPT/RTPC-like"/>
    <property type="match status" value="1"/>
</dbReference>
<dbReference type="SUPFAM" id="SSF51735">
    <property type="entry name" value="NAD(P)-binding Rossmann-fold domains"/>
    <property type="match status" value="1"/>
</dbReference>
<dbReference type="SUPFAM" id="SSF52540">
    <property type="entry name" value="P-loop containing nucleoside triphosphate hydrolases"/>
    <property type="match status" value="1"/>
</dbReference>
<dbReference type="PROSITE" id="PS01028">
    <property type="entry name" value="DEHYDROQUINASE_I"/>
    <property type="match status" value="1"/>
</dbReference>
<dbReference type="PROSITE" id="PS00104">
    <property type="entry name" value="EPSP_SYNTHASE_1"/>
    <property type="match status" value="1"/>
</dbReference>
<dbReference type="PROSITE" id="PS00885">
    <property type="entry name" value="EPSP_SYNTHASE_2"/>
    <property type="match status" value="1"/>
</dbReference>
<dbReference type="PROSITE" id="PS01128">
    <property type="entry name" value="SHIKIMATE_KINASE"/>
    <property type="match status" value="1"/>
</dbReference>
<feature type="chain" id="PRO_0000406733" description="Pentafunctional AROM polypeptide 2">
    <location>
        <begin position="1"/>
        <end position="1571"/>
    </location>
</feature>
<feature type="region of interest" description="3-dehydroquinate synthase">
    <location>
        <begin position="1"/>
        <end position="380"/>
    </location>
</feature>
<feature type="region of interest" description="EPSP synthase">
    <location>
        <begin position="393"/>
        <end position="838"/>
    </location>
</feature>
<feature type="region of interest" description="Shikimate kinase">
    <location>
        <begin position="859"/>
        <end position="1051"/>
    </location>
</feature>
<feature type="region of interest" description="3-dehydroquinase">
    <location>
        <begin position="1052"/>
        <end position="1273"/>
    </location>
</feature>
<feature type="region of interest" description="Shikimate dehydrogenase">
    <location>
        <begin position="1286"/>
        <end position="1571"/>
    </location>
</feature>
<feature type="active site" description="Proton acceptor; for 3-dehydroquinate synthase activity" evidence="1">
    <location>
        <position position="256"/>
    </location>
</feature>
<feature type="active site" description="Proton acceptor; for 3-dehydroquinate synthase activity" evidence="1">
    <location>
        <position position="271"/>
    </location>
</feature>
<feature type="active site" description="For EPSP synthase activity" evidence="1">
    <location>
        <position position="820"/>
    </location>
</feature>
<feature type="active site" description="Proton acceptor; for 3-dehydroquinate dehydratase activity" evidence="1">
    <location>
        <position position="1175"/>
    </location>
</feature>
<feature type="active site" description="Schiff-base intermediate with substrate; for 3-dehydroquinate dehydratase activity" evidence="1">
    <location>
        <position position="1203"/>
    </location>
</feature>
<feature type="binding site" evidence="1">
    <location>
        <begin position="44"/>
        <end position="46"/>
    </location>
    <ligand>
        <name>NAD(+)</name>
        <dbReference type="ChEBI" id="CHEBI:57540"/>
    </ligand>
</feature>
<feature type="binding site" evidence="1">
    <location>
        <begin position="81"/>
        <end position="84"/>
    </location>
    <ligand>
        <name>NAD(+)</name>
        <dbReference type="ChEBI" id="CHEBI:57540"/>
    </ligand>
</feature>
<feature type="binding site" evidence="1">
    <location>
        <begin position="112"/>
        <end position="114"/>
    </location>
    <ligand>
        <name>NAD(+)</name>
        <dbReference type="ChEBI" id="CHEBI:57540"/>
    </ligand>
</feature>
<feature type="binding site" evidence="1">
    <location>
        <position position="117"/>
    </location>
    <ligand>
        <name>NAD(+)</name>
        <dbReference type="ChEBI" id="CHEBI:57540"/>
    </ligand>
</feature>
<feature type="binding site" evidence="1">
    <location>
        <position position="128"/>
    </location>
    <ligand>
        <name>7-phospho-2-dehydro-3-deoxy-D-arabino-heptonate</name>
        <dbReference type="ChEBI" id="CHEBI:58394"/>
    </ligand>
</feature>
<feature type="binding site" evidence="1">
    <location>
        <begin position="137"/>
        <end position="138"/>
    </location>
    <ligand>
        <name>NAD(+)</name>
        <dbReference type="ChEBI" id="CHEBI:57540"/>
    </ligand>
</feature>
<feature type="binding site" evidence="1">
    <location>
        <position position="144"/>
    </location>
    <ligand>
        <name>7-phospho-2-dehydro-3-deoxy-D-arabino-heptonate</name>
        <dbReference type="ChEBI" id="CHEBI:58394"/>
    </ligand>
</feature>
<feature type="binding site" evidence="1">
    <location>
        <position position="150"/>
    </location>
    <ligand>
        <name>7-phospho-2-dehydro-3-deoxy-D-arabino-heptonate</name>
        <dbReference type="ChEBI" id="CHEBI:58394"/>
    </ligand>
</feature>
<feature type="binding site" evidence="1">
    <location>
        <position position="159"/>
    </location>
    <ligand>
        <name>NAD(+)</name>
        <dbReference type="ChEBI" id="CHEBI:57540"/>
    </ligand>
</feature>
<feature type="binding site" evidence="1">
    <location>
        <position position="160"/>
    </location>
    <ligand>
        <name>7-phospho-2-dehydro-3-deoxy-D-arabino-heptonate</name>
        <dbReference type="ChEBI" id="CHEBI:58394"/>
    </ligand>
</feature>
<feature type="binding site" evidence="1">
    <location>
        <begin position="177"/>
        <end position="180"/>
    </location>
    <ligand>
        <name>NAD(+)</name>
        <dbReference type="ChEBI" id="CHEBI:57540"/>
    </ligand>
</feature>
<feature type="binding site" evidence="1">
    <location>
        <position position="188"/>
    </location>
    <ligand>
        <name>NAD(+)</name>
        <dbReference type="ChEBI" id="CHEBI:57540"/>
    </ligand>
</feature>
<feature type="binding site" evidence="1">
    <location>
        <begin position="192"/>
        <end position="195"/>
    </location>
    <ligand>
        <name>7-phospho-2-dehydro-3-deoxy-D-arabino-heptonate</name>
        <dbReference type="ChEBI" id="CHEBI:58394"/>
    </ligand>
</feature>
<feature type="binding site" evidence="1">
    <location>
        <position position="192"/>
    </location>
    <ligand>
        <name>Zn(2+)</name>
        <dbReference type="ChEBI" id="CHEBI:29105"/>
        <note>catalytic</note>
    </ligand>
</feature>
<feature type="binding site" evidence="1">
    <location>
        <position position="246"/>
    </location>
    <ligand>
        <name>7-phospho-2-dehydro-3-deoxy-D-arabino-heptonate</name>
        <dbReference type="ChEBI" id="CHEBI:58394"/>
    </ligand>
</feature>
<feature type="binding site" evidence="1">
    <location>
        <begin position="260"/>
        <end position="264"/>
    </location>
    <ligand>
        <name>7-phospho-2-dehydro-3-deoxy-D-arabino-heptonate</name>
        <dbReference type="ChEBI" id="CHEBI:58394"/>
    </ligand>
</feature>
<feature type="binding site" evidence="1">
    <location>
        <position position="267"/>
    </location>
    <ligand>
        <name>7-phospho-2-dehydro-3-deoxy-D-arabino-heptonate</name>
        <dbReference type="ChEBI" id="CHEBI:58394"/>
    </ligand>
</feature>
<feature type="binding site" evidence="1">
    <location>
        <position position="267"/>
    </location>
    <ligand>
        <name>Zn(2+)</name>
        <dbReference type="ChEBI" id="CHEBI:29105"/>
        <note>catalytic</note>
    </ligand>
</feature>
<feature type="binding site" evidence="1">
    <location>
        <position position="283"/>
    </location>
    <ligand>
        <name>7-phospho-2-dehydro-3-deoxy-D-arabino-heptonate</name>
        <dbReference type="ChEBI" id="CHEBI:58394"/>
    </ligand>
</feature>
<feature type="binding site" evidence="1">
    <location>
        <position position="283"/>
    </location>
    <ligand>
        <name>Zn(2+)</name>
        <dbReference type="ChEBI" id="CHEBI:29105"/>
        <note>catalytic</note>
    </ligand>
</feature>
<feature type="binding site" evidence="1">
    <location>
        <position position="352"/>
    </location>
    <ligand>
        <name>7-phospho-2-dehydro-3-deoxy-D-arabino-heptonate</name>
        <dbReference type="ChEBI" id="CHEBI:58394"/>
    </ligand>
</feature>
<feature type="binding site" evidence="1">
    <location>
        <begin position="866"/>
        <end position="873"/>
    </location>
    <ligand>
        <name>ATP</name>
        <dbReference type="ChEBI" id="CHEBI:30616"/>
    </ligand>
</feature>
<proteinExistence type="inferred from homology"/>
<evidence type="ECO:0000255" key="1">
    <source>
        <dbReference type="HAMAP-Rule" id="MF_03143"/>
    </source>
</evidence>